<reference key="1">
    <citation type="journal article" date="2013" name="Proc. Natl. Acad. Sci. U.S.A.">
        <title>Improving the coverage of the cyanobacterial phylum using diversity-driven genome sequencing.</title>
        <authorList>
            <person name="Shih P.M."/>
            <person name="Wu D."/>
            <person name="Latifi A."/>
            <person name="Axen S.D."/>
            <person name="Fewer D.P."/>
            <person name="Talla E."/>
            <person name="Calteau A."/>
            <person name="Cai F."/>
            <person name="Tandeau de Marsac N."/>
            <person name="Rippka R."/>
            <person name="Herdman M."/>
            <person name="Sivonen K."/>
            <person name="Coursin T."/>
            <person name="Laurent T."/>
            <person name="Goodwin L."/>
            <person name="Nolan M."/>
            <person name="Davenport K.W."/>
            <person name="Han C.S."/>
            <person name="Rubin E.M."/>
            <person name="Eisen J.A."/>
            <person name="Woyke T."/>
            <person name="Gugger M."/>
            <person name="Kerfeld C.A."/>
        </authorList>
    </citation>
    <scope>NUCLEOTIDE SEQUENCE [LARGE SCALE GENOMIC DNA]</scope>
    <source>
        <strain>PCC 7418</strain>
    </source>
</reference>
<reference evidence="6" key="2">
    <citation type="journal article" date="2019" name="Plant Physiol.">
        <title>Heterohexamers Formed by CcmK3 and CcmK4 Increase the Complexity of Beta Carboxysome Shells.</title>
        <authorList>
            <person name="Sommer M."/>
            <person name="Sutter M."/>
            <person name="Gupta S."/>
            <person name="Kirst H."/>
            <person name="Turmo A."/>
            <person name="Lechno-Yossef S."/>
            <person name="Burton R.L."/>
            <person name="Saechao C."/>
            <person name="Sloan N.B."/>
            <person name="Cheng X."/>
            <person name="Chan L.G."/>
            <person name="Petzold C.J."/>
            <person name="Fuentes-Cabrera M."/>
            <person name="Ralston C.Y."/>
            <person name="Kerfeld C.A."/>
        </authorList>
    </citation>
    <scope>X-RAY CRYSTALLOGRAPHY (1.81 ANGSTROMS)</scope>
    <scope>SUBUNIT</scope>
    <scope>SUBCELLULAR LOCATION</scope>
    <scope>DOMAIN</scope>
    <source>
        <strain>PCC 7418</strain>
    </source>
</reference>
<organism>
    <name type="scientific">Halothece sp. (strain PCC 7418)</name>
    <name type="common">Synechococcus sp. (strain PCC 7418)</name>
    <dbReference type="NCBI Taxonomy" id="65093"/>
    <lineage>
        <taxon>Bacteria</taxon>
        <taxon>Bacillati</taxon>
        <taxon>Cyanobacteriota</taxon>
        <taxon>Cyanophyceae</taxon>
        <taxon>Oscillatoriophycideae</taxon>
        <taxon>Chroococcales</taxon>
        <taxon>Halothecacae</taxon>
        <taxon>Halothece cluster</taxon>
        <taxon>Halothece</taxon>
    </lineage>
</organism>
<name>CCMK4_HALP7</name>
<gene>
    <name evidence="3" type="primary">ccmK4</name>
    <name type="ordered locus">PCC7418_0347</name>
</gene>
<sequence length="117" mass="12602">MSLDAVGSLETKGFPGVLAAADAMVKTGRVTLVGYIRAGSARFTIIIRGDVSEVKTAMDAGIHAVDKAYGAALETWVIIPRPHENVECVLPIAYNENVERFRESTERPLIGSSQNRS</sequence>
<dbReference type="EMBL" id="CP003945">
    <property type="protein sequence ID" value="AFZ42581.1"/>
    <property type="molecule type" value="Genomic_DNA"/>
</dbReference>
<dbReference type="RefSeq" id="WP_015224459.1">
    <property type="nucleotide sequence ID" value="NC_019779.1"/>
</dbReference>
<dbReference type="PDB" id="5VGU">
    <property type="method" value="X-ray"/>
    <property type="resolution" value="1.81 A"/>
    <property type="chains" value="A/B/C/D/E/F=1-117"/>
</dbReference>
<dbReference type="PDBsum" id="5VGU"/>
<dbReference type="SMR" id="K9Y6N7"/>
<dbReference type="STRING" id="65093.PCC7418_0347"/>
<dbReference type="KEGG" id="hao:PCC7418_0347"/>
<dbReference type="PATRIC" id="fig|65093.3.peg.363"/>
<dbReference type="eggNOG" id="COG4577">
    <property type="taxonomic scope" value="Bacteria"/>
</dbReference>
<dbReference type="HOGENOM" id="CLU_064903_5_0_3"/>
<dbReference type="OrthoDB" id="7057533at2"/>
<dbReference type="Proteomes" id="UP000010481">
    <property type="component" value="Chromosome"/>
</dbReference>
<dbReference type="GO" id="GO:0031470">
    <property type="term" value="C:carboxysome"/>
    <property type="evidence" value="ECO:0007669"/>
    <property type="project" value="UniProtKB-SubCell"/>
</dbReference>
<dbReference type="GO" id="GO:0043886">
    <property type="term" value="F:structural constituent of carboxysome shell"/>
    <property type="evidence" value="ECO:0007669"/>
    <property type="project" value="UniProtKB-UniRule"/>
</dbReference>
<dbReference type="GO" id="GO:0015977">
    <property type="term" value="P:carbon fixation"/>
    <property type="evidence" value="ECO:0007669"/>
    <property type="project" value="UniProtKB-UniRule"/>
</dbReference>
<dbReference type="GO" id="GO:0015979">
    <property type="term" value="P:photosynthesis"/>
    <property type="evidence" value="ECO:0007669"/>
    <property type="project" value="UniProtKB-KW"/>
</dbReference>
<dbReference type="CDD" id="cd07057">
    <property type="entry name" value="BMC_CcmK"/>
    <property type="match status" value="1"/>
</dbReference>
<dbReference type="Gene3D" id="3.30.70.1710">
    <property type="match status" value="1"/>
</dbReference>
<dbReference type="HAMAP" id="MF_00854">
    <property type="entry name" value="CcmK"/>
    <property type="match status" value="1"/>
</dbReference>
<dbReference type="InterPro" id="IPR000249">
    <property type="entry name" value="BMC_dom"/>
</dbReference>
<dbReference type="InterPro" id="IPR050575">
    <property type="entry name" value="BMC_shell"/>
</dbReference>
<dbReference type="InterPro" id="IPR046380">
    <property type="entry name" value="CcmK"/>
</dbReference>
<dbReference type="InterPro" id="IPR037233">
    <property type="entry name" value="CcmK-like_sf"/>
</dbReference>
<dbReference type="InterPro" id="IPR044872">
    <property type="entry name" value="CcmK/CsoS1_BMC"/>
</dbReference>
<dbReference type="PANTHER" id="PTHR33941:SF13">
    <property type="entry name" value="CARBOXYSOME SHELL PROTEIN CCMK4"/>
    <property type="match status" value="1"/>
</dbReference>
<dbReference type="PANTHER" id="PTHR33941">
    <property type="entry name" value="PROPANEDIOL UTILIZATION PROTEIN PDUA"/>
    <property type="match status" value="1"/>
</dbReference>
<dbReference type="Pfam" id="PF00936">
    <property type="entry name" value="BMC"/>
    <property type="match status" value="1"/>
</dbReference>
<dbReference type="SMART" id="SM00877">
    <property type="entry name" value="BMC"/>
    <property type="match status" value="1"/>
</dbReference>
<dbReference type="SUPFAM" id="SSF143414">
    <property type="entry name" value="CcmK-like"/>
    <property type="match status" value="1"/>
</dbReference>
<dbReference type="PROSITE" id="PS51930">
    <property type="entry name" value="BMC_2"/>
    <property type="match status" value="1"/>
</dbReference>
<feature type="chain" id="PRO_0000451238" description="Carboxysome shell protein CcmK4">
    <location>
        <begin position="1"/>
        <end position="117"/>
    </location>
</feature>
<feature type="domain" description="BMC" evidence="1">
    <location>
        <begin position="5"/>
        <end position="91"/>
    </location>
</feature>
<feature type="strand" evidence="7">
    <location>
        <begin position="4"/>
        <end position="13"/>
    </location>
</feature>
<feature type="helix" evidence="7">
    <location>
        <begin position="14"/>
        <end position="27"/>
    </location>
</feature>
<feature type="strand" evidence="7">
    <location>
        <begin position="28"/>
        <end position="39"/>
    </location>
</feature>
<feature type="strand" evidence="7">
    <location>
        <begin position="42"/>
        <end position="49"/>
    </location>
</feature>
<feature type="helix" evidence="7">
    <location>
        <begin position="51"/>
        <end position="65"/>
    </location>
</feature>
<feature type="strand" evidence="7">
    <location>
        <begin position="72"/>
        <end position="81"/>
    </location>
</feature>
<feature type="helix" evidence="7">
    <location>
        <begin position="84"/>
        <end position="89"/>
    </location>
</feature>
<feature type="helix" evidence="7">
    <location>
        <begin position="96"/>
        <end position="98"/>
    </location>
</feature>
<feature type="helix" evidence="7">
    <location>
        <begin position="99"/>
        <end position="104"/>
    </location>
</feature>
<accession>K9Y6N7</accession>
<comment type="function">
    <text evidence="2">A probably essential, minor shell protein of the carboxysome, a polyhedral inclusion where RuBisCO (ribulose bisphosphate carboxylase, rbcL-rbcS) is sequestered. Hexamers form sheets that form the facets of the polyhedral carboxysome. In PCC 7418 there are several CcmK paralogs with presumably functional differences. This subunit can probably make both homohexamers and heterohexamers with CcmK3. Both hexamers can also make dodecamers, formation depends on buffer conditions.</text>
</comment>
<comment type="subunit">
    <text evidence="2">Crystallizes as a homohexamer. Interacts stably with CcmK3, forming heterohexamers that can make dodecamers. Heterohexamers have a 1:2 CcmK3:CcmK4 stoichiometry. Upon expression in E.coli forms large aggregates.</text>
</comment>
<comment type="subcellular location">
    <subcellularLocation>
        <location evidence="1 5">Carboxysome</location>
    </subcellularLocation>
    <text evidence="4">This cyanobacterium makes beta-type carboxysomes.</text>
</comment>
<comment type="domain">
    <text evidence="1 2">The tight homohexamer forms a small pore which is positively charged.</text>
</comment>
<comment type="similarity">
    <text evidence="1">Belongs to the bacterial microcompartments protein family. CcmK subfamily.</text>
</comment>
<proteinExistence type="evidence at protein level"/>
<protein>
    <recommendedName>
        <fullName evidence="3">Carboxysome shell protein CcmK4</fullName>
    </recommendedName>
    <alternativeName>
        <fullName evidence="1">Carbon dioxide-concentrating mechanism protein CcmK4</fullName>
    </alternativeName>
</protein>
<evidence type="ECO:0000255" key="1">
    <source>
        <dbReference type="HAMAP-Rule" id="MF_00854"/>
    </source>
</evidence>
<evidence type="ECO:0000269" key="2">
    <source>
    </source>
</evidence>
<evidence type="ECO:0000303" key="3">
    <source>
    </source>
</evidence>
<evidence type="ECO:0000305" key="4"/>
<evidence type="ECO:0000305" key="5">
    <source>
    </source>
</evidence>
<evidence type="ECO:0007744" key="6">
    <source>
        <dbReference type="PDB" id="5VGU"/>
    </source>
</evidence>
<evidence type="ECO:0007829" key="7">
    <source>
        <dbReference type="PDB" id="5VGU"/>
    </source>
</evidence>
<keyword id="KW-0002">3D-structure</keyword>
<keyword id="KW-1283">Bacterial microcompartment</keyword>
<keyword id="KW-0120">Carbon dioxide fixation</keyword>
<keyword id="KW-1282">Carboxysome</keyword>
<keyword id="KW-0602">Photosynthesis</keyword>
<keyword id="KW-1185">Reference proteome</keyword>